<feature type="initiator methionine" description="Removed" evidence="1">
    <location>
        <position position="1"/>
    </location>
</feature>
<feature type="chain" id="PRO_0000199666" description="Profilin-1">
    <location>
        <begin position="2"/>
        <end position="131"/>
    </location>
</feature>
<comment type="function">
    <text>Binds to actin and affects the structure of the cytoskeleton. At high concentrations, profilin prevents the polymerization of actin, whereas it enhances it at low concentrations. By binding to PIP2, it inhibits the formation of IP3 and DG.</text>
</comment>
<comment type="subunit">
    <text>Occurs in many kinds of cells as a complex with monomeric actin in a 1:1 ratio.</text>
</comment>
<comment type="subcellular location">
    <subcellularLocation>
        <location>Cytoplasm</location>
        <location>Cytoskeleton</location>
    </subcellularLocation>
</comment>
<comment type="tissue specificity">
    <text>Cytoplasmic distribution in hypocotyls. In root nodules, it is found in all cells, but is more abundant in the vascular tissue as well as the endodermis.</text>
</comment>
<comment type="similarity">
    <text evidence="2">Belongs to the profilin family.</text>
</comment>
<sequence>MSWQTYVDDHLLCEIEGNHLTHAAILGQDGSVWAKSASFPQFKPEEITGIMNDFNEPGTLAPTGLYIGGTKYMVIQGEPGSVIRGKKGPGGVTVKKTNLALVIGIYDEPMTPGQCNMIVERLGDYLIEQGL</sequence>
<keyword id="KW-0009">Actin-binding</keyword>
<keyword id="KW-0963">Cytoplasm</keyword>
<keyword id="KW-0206">Cytoskeleton</keyword>
<keyword id="KW-0903">Direct protein sequencing</keyword>
<name>PROF1_PHAVU</name>
<evidence type="ECO:0000250" key="1"/>
<evidence type="ECO:0000305" key="2"/>
<reference key="1">
    <citation type="journal article" date="1995" name="Plant Physiol.">
        <title>Purification, characterization, and cDNA cloning of profilin from Phaseolus vulgaris.</title>
        <authorList>
            <person name="Vidali L."/>
            <person name="Perez H.E."/>
            <person name="Valdes Lopez V."/>
            <person name="Noguez R."/>
            <person name="Zamudio F."/>
            <person name="Sanchez F."/>
        </authorList>
    </citation>
    <scope>NUCLEOTIDE SEQUENCE [MRNA]</scope>
    <scope>PROTEIN SEQUENCE OF 47-76</scope>
    <source>
        <strain>cv. Negro Jamapa</strain>
        <tissue>Root nodule</tissue>
    </source>
</reference>
<dbReference type="EMBL" id="X81982">
    <property type="protein sequence ID" value="CAA57508.1"/>
    <property type="molecule type" value="mRNA"/>
</dbReference>
<dbReference type="PIR" id="S49351">
    <property type="entry name" value="S49351"/>
</dbReference>
<dbReference type="RefSeq" id="XP_007160275.1">
    <property type="nucleotide sequence ID" value="XM_007160213.1"/>
</dbReference>
<dbReference type="RefSeq" id="XP_068471149.1">
    <property type="nucleotide sequence ID" value="XM_068615048.1"/>
</dbReference>
<dbReference type="SMR" id="P49231"/>
<dbReference type="ProMEX" id="P49231"/>
<dbReference type="EnsemblPlants" id="ESW32269">
    <property type="protein sequence ID" value="ESW32269"/>
    <property type="gene ID" value="PHAVU_002G307600g"/>
</dbReference>
<dbReference type="GeneID" id="137812826"/>
<dbReference type="Gramene" id="ESW32269">
    <property type="protein sequence ID" value="ESW32269"/>
    <property type="gene ID" value="PHAVU_002G307600g"/>
</dbReference>
<dbReference type="eggNOG" id="KOG1755">
    <property type="taxonomic scope" value="Eukaryota"/>
</dbReference>
<dbReference type="OMA" id="CEIDSGH"/>
<dbReference type="OrthoDB" id="421374at2759"/>
<dbReference type="GO" id="GO:0005938">
    <property type="term" value="C:cell cortex"/>
    <property type="evidence" value="ECO:0007669"/>
    <property type="project" value="TreeGrafter"/>
</dbReference>
<dbReference type="GO" id="GO:0005856">
    <property type="term" value="C:cytoskeleton"/>
    <property type="evidence" value="ECO:0007669"/>
    <property type="project" value="UniProtKB-SubCell"/>
</dbReference>
<dbReference type="GO" id="GO:0003785">
    <property type="term" value="F:actin monomer binding"/>
    <property type="evidence" value="ECO:0007669"/>
    <property type="project" value="TreeGrafter"/>
</dbReference>
<dbReference type="CDD" id="cd00148">
    <property type="entry name" value="PROF"/>
    <property type="match status" value="1"/>
</dbReference>
<dbReference type="FunFam" id="3.30.450.30:FF:000001">
    <property type="entry name" value="Profilin"/>
    <property type="match status" value="1"/>
</dbReference>
<dbReference type="Gene3D" id="3.30.450.30">
    <property type="entry name" value="Dynein light chain 2a, cytoplasmic"/>
    <property type="match status" value="1"/>
</dbReference>
<dbReference type="InterPro" id="IPR048278">
    <property type="entry name" value="PFN"/>
</dbReference>
<dbReference type="InterPro" id="IPR005455">
    <property type="entry name" value="PFN_euk"/>
</dbReference>
<dbReference type="InterPro" id="IPR036140">
    <property type="entry name" value="PFN_sf"/>
</dbReference>
<dbReference type="InterPro" id="IPR027310">
    <property type="entry name" value="Profilin_CS"/>
</dbReference>
<dbReference type="PANTHER" id="PTHR11604">
    <property type="entry name" value="PROFILIN"/>
    <property type="match status" value="1"/>
</dbReference>
<dbReference type="PANTHER" id="PTHR11604:SF49">
    <property type="entry name" value="PROFILIN-2"/>
    <property type="match status" value="1"/>
</dbReference>
<dbReference type="Pfam" id="PF00235">
    <property type="entry name" value="Profilin"/>
    <property type="match status" value="1"/>
</dbReference>
<dbReference type="PRINTS" id="PR00392">
    <property type="entry name" value="PROFILIN"/>
</dbReference>
<dbReference type="PRINTS" id="PR01640">
    <property type="entry name" value="PROFILINPLNT"/>
</dbReference>
<dbReference type="SMART" id="SM00392">
    <property type="entry name" value="PROF"/>
    <property type="match status" value="1"/>
</dbReference>
<dbReference type="SUPFAM" id="SSF55770">
    <property type="entry name" value="Profilin (actin-binding protein)"/>
    <property type="match status" value="1"/>
</dbReference>
<dbReference type="PROSITE" id="PS00414">
    <property type="entry name" value="PROFILIN"/>
    <property type="match status" value="1"/>
</dbReference>
<proteinExistence type="evidence at protein level"/>
<protein>
    <recommendedName>
        <fullName>Profilin-1</fullName>
    </recommendedName>
</protein>
<organism>
    <name type="scientific">Phaseolus vulgaris</name>
    <name type="common">Kidney bean</name>
    <name type="synonym">French bean</name>
    <dbReference type="NCBI Taxonomy" id="3885"/>
    <lineage>
        <taxon>Eukaryota</taxon>
        <taxon>Viridiplantae</taxon>
        <taxon>Streptophyta</taxon>
        <taxon>Embryophyta</taxon>
        <taxon>Tracheophyta</taxon>
        <taxon>Spermatophyta</taxon>
        <taxon>Magnoliopsida</taxon>
        <taxon>eudicotyledons</taxon>
        <taxon>Gunneridae</taxon>
        <taxon>Pentapetalae</taxon>
        <taxon>rosids</taxon>
        <taxon>fabids</taxon>
        <taxon>Fabales</taxon>
        <taxon>Fabaceae</taxon>
        <taxon>Papilionoideae</taxon>
        <taxon>50 kb inversion clade</taxon>
        <taxon>NPAAA clade</taxon>
        <taxon>indigoferoid/millettioid clade</taxon>
        <taxon>Phaseoleae</taxon>
        <taxon>Phaseolus</taxon>
    </lineage>
</organism>
<accession>P49231</accession>